<reference key="1">
    <citation type="journal article" date="2011" name="MBio">
        <title>Novel metabolic attributes of the genus Cyanothece, comprising a group of unicellular nitrogen-fixing Cyanobacteria.</title>
        <authorList>
            <person name="Bandyopadhyay A."/>
            <person name="Elvitigala T."/>
            <person name="Welsh E."/>
            <person name="Stockel J."/>
            <person name="Liberton M."/>
            <person name="Min H."/>
            <person name="Sherman L.A."/>
            <person name="Pakrasi H.B."/>
        </authorList>
    </citation>
    <scope>NUCLEOTIDE SEQUENCE [LARGE SCALE GENOMIC DNA]</scope>
    <source>
        <strain>PCC 7425 / ATCC 29141</strain>
    </source>
</reference>
<gene>
    <name evidence="1" type="primary">rpmG</name>
    <name evidence="1" type="synonym">rpl33</name>
    <name type="ordered locus">Cyan7425_0903</name>
</gene>
<dbReference type="EMBL" id="CP001344">
    <property type="protein sequence ID" value="ACL43289.1"/>
    <property type="molecule type" value="Genomic_DNA"/>
</dbReference>
<dbReference type="SMR" id="B8HWY6"/>
<dbReference type="STRING" id="395961.Cyan7425_0903"/>
<dbReference type="KEGG" id="cyn:Cyan7425_0903"/>
<dbReference type="eggNOG" id="COG0267">
    <property type="taxonomic scope" value="Bacteria"/>
</dbReference>
<dbReference type="HOGENOM" id="CLU_190949_3_0_3"/>
<dbReference type="OrthoDB" id="9801333at2"/>
<dbReference type="GO" id="GO:0005737">
    <property type="term" value="C:cytoplasm"/>
    <property type="evidence" value="ECO:0007669"/>
    <property type="project" value="UniProtKB-ARBA"/>
</dbReference>
<dbReference type="GO" id="GO:1990904">
    <property type="term" value="C:ribonucleoprotein complex"/>
    <property type="evidence" value="ECO:0007669"/>
    <property type="project" value="UniProtKB-KW"/>
</dbReference>
<dbReference type="GO" id="GO:0005840">
    <property type="term" value="C:ribosome"/>
    <property type="evidence" value="ECO:0007669"/>
    <property type="project" value="UniProtKB-KW"/>
</dbReference>
<dbReference type="GO" id="GO:0003735">
    <property type="term" value="F:structural constituent of ribosome"/>
    <property type="evidence" value="ECO:0007669"/>
    <property type="project" value="InterPro"/>
</dbReference>
<dbReference type="GO" id="GO:0006412">
    <property type="term" value="P:translation"/>
    <property type="evidence" value="ECO:0007669"/>
    <property type="project" value="UniProtKB-UniRule"/>
</dbReference>
<dbReference type="Gene3D" id="2.20.28.120">
    <property type="entry name" value="Ribosomal protein L33"/>
    <property type="match status" value="1"/>
</dbReference>
<dbReference type="HAMAP" id="MF_00294">
    <property type="entry name" value="Ribosomal_bL33"/>
    <property type="match status" value="1"/>
</dbReference>
<dbReference type="InterPro" id="IPR001705">
    <property type="entry name" value="Ribosomal_bL33"/>
</dbReference>
<dbReference type="InterPro" id="IPR018264">
    <property type="entry name" value="Ribosomal_bL33_CS"/>
</dbReference>
<dbReference type="InterPro" id="IPR038584">
    <property type="entry name" value="Ribosomal_bL33_sf"/>
</dbReference>
<dbReference type="InterPro" id="IPR011332">
    <property type="entry name" value="Ribosomal_zn-bd"/>
</dbReference>
<dbReference type="NCBIfam" id="NF001764">
    <property type="entry name" value="PRK00504.1"/>
    <property type="match status" value="1"/>
</dbReference>
<dbReference type="NCBIfam" id="NF001860">
    <property type="entry name" value="PRK00595.1"/>
    <property type="match status" value="1"/>
</dbReference>
<dbReference type="NCBIfam" id="TIGR01023">
    <property type="entry name" value="rpmG_bact"/>
    <property type="match status" value="1"/>
</dbReference>
<dbReference type="PANTHER" id="PTHR43168">
    <property type="entry name" value="50S RIBOSOMAL PROTEIN L33, CHLOROPLASTIC"/>
    <property type="match status" value="1"/>
</dbReference>
<dbReference type="PANTHER" id="PTHR43168:SF2">
    <property type="entry name" value="LARGE RIBOSOMAL SUBUNIT PROTEIN BL33C"/>
    <property type="match status" value="1"/>
</dbReference>
<dbReference type="Pfam" id="PF00471">
    <property type="entry name" value="Ribosomal_L33"/>
    <property type="match status" value="1"/>
</dbReference>
<dbReference type="SUPFAM" id="SSF57829">
    <property type="entry name" value="Zn-binding ribosomal proteins"/>
    <property type="match status" value="1"/>
</dbReference>
<dbReference type="PROSITE" id="PS00582">
    <property type="entry name" value="RIBOSOMAL_L33"/>
    <property type="match status" value="1"/>
</dbReference>
<evidence type="ECO:0000255" key="1">
    <source>
        <dbReference type="HAMAP-Rule" id="MF_00294"/>
    </source>
</evidence>
<evidence type="ECO:0000305" key="2"/>
<accession>B8HWY6</accession>
<sequence length="62" mass="7113">MAKGVRLIITLECTECRSNPAKRSAGVSRYTTTKNRRNTTARLELNKFCPHCNKHTVHKEIK</sequence>
<protein>
    <recommendedName>
        <fullName evidence="1">Large ribosomal subunit protein bL33</fullName>
    </recommendedName>
    <alternativeName>
        <fullName evidence="2">50S ribosomal protein L33</fullName>
    </alternativeName>
</protein>
<keyword id="KW-0687">Ribonucleoprotein</keyword>
<keyword id="KW-0689">Ribosomal protein</keyword>
<organism>
    <name type="scientific">Cyanothece sp. (strain PCC 7425 / ATCC 29141)</name>
    <dbReference type="NCBI Taxonomy" id="395961"/>
    <lineage>
        <taxon>Bacteria</taxon>
        <taxon>Bacillati</taxon>
        <taxon>Cyanobacteriota</taxon>
        <taxon>Cyanophyceae</taxon>
        <taxon>Gomontiellales</taxon>
        <taxon>Cyanothecaceae</taxon>
        <taxon>Cyanothece</taxon>
    </lineage>
</organism>
<name>RL33_CYAP4</name>
<feature type="chain" id="PRO_1000204906" description="Large ribosomal subunit protein bL33">
    <location>
        <begin position="1"/>
        <end position="62"/>
    </location>
</feature>
<comment type="similarity">
    <text evidence="1">Belongs to the bacterial ribosomal protein bL33 family.</text>
</comment>
<proteinExistence type="inferred from homology"/>